<gene>
    <name evidence="1" type="primary">rplL</name>
    <name type="ordered locus">BA_0100</name>
    <name type="ordered locus">GBAA_0100</name>
    <name type="ordered locus">BAS0100</name>
</gene>
<protein>
    <recommendedName>
        <fullName evidence="1">Large ribosomal subunit protein bL12</fullName>
    </recommendedName>
    <alternativeName>
        <fullName evidence="2">50S ribosomal protein L7/L12</fullName>
    </alternativeName>
</protein>
<keyword id="KW-1185">Reference proteome</keyword>
<keyword id="KW-0687">Ribonucleoprotein</keyword>
<keyword id="KW-0689">Ribosomal protein</keyword>
<sequence length="119" mass="12517">MTKEQIIEAVKSMTVLELNDLVKAIEEEFGVTAAAPVAVAGGAGEAAAEKTEFDVELTSAGAQKIKVIKVVREITGLGLKEAKELVDNTPKVIKEAAAKEEAEEIKAKLEEVGAAVEVK</sequence>
<proteinExistence type="inferred from homology"/>
<reference key="1">
    <citation type="journal article" date="2003" name="Nature">
        <title>The genome sequence of Bacillus anthracis Ames and comparison to closely related bacteria.</title>
        <authorList>
            <person name="Read T.D."/>
            <person name="Peterson S.N."/>
            <person name="Tourasse N.J."/>
            <person name="Baillie L.W."/>
            <person name="Paulsen I.T."/>
            <person name="Nelson K.E."/>
            <person name="Tettelin H."/>
            <person name="Fouts D.E."/>
            <person name="Eisen J.A."/>
            <person name="Gill S.R."/>
            <person name="Holtzapple E.K."/>
            <person name="Okstad O.A."/>
            <person name="Helgason E."/>
            <person name="Rilstone J."/>
            <person name="Wu M."/>
            <person name="Kolonay J.F."/>
            <person name="Beanan M.J."/>
            <person name="Dodson R.J."/>
            <person name="Brinkac L.M."/>
            <person name="Gwinn M.L."/>
            <person name="DeBoy R.T."/>
            <person name="Madpu R."/>
            <person name="Daugherty S.C."/>
            <person name="Durkin A.S."/>
            <person name="Haft D.H."/>
            <person name="Nelson W.C."/>
            <person name="Peterson J.D."/>
            <person name="Pop M."/>
            <person name="Khouri H.M."/>
            <person name="Radune D."/>
            <person name="Benton J.L."/>
            <person name="Mahamoud Y."/>
            <person name="Jiang L."/>
            <person name="Hance I.R."/>
            <person name="Weidman J.F."/>
            <person name="Berry K.J."/>
            <person name="Plaut R.D."/>
            <person name="Wolf A.M."/>
            <person name="Watkins K.L."/>
            <person name="Nierman W.C."/>
            <person name="Hazen A."/>
            <person name="Cline R.T."/>
            <person name="Redmond C."/>
            <person name="Thwaite J.E."/>
            <person name="White O."/>
            <person name="Salzberg S.L."/>
            <person name="Thomason B."/>
            <person name="Friedlander A.M."/>
            <person name="Koehler T.M."/>
            <person name="Hanna P.C."/>
            <person name="Kolstoe A.-B."/>
            <person name="Fraser C.M."/>
        </authorList>
    </citation>
    <scope>NUCLEOTIDE SEQUENCE [LARGE SCALE GENOMIC DNA]</scope>
    <source>
        <strain>Ames / isolate Porton</strain>
    </source>
</reference>
<reference key="2">
    <citation type="submission" date="2004-01" db="EMBL/GenBank/DDBJ databases">
        <title>Complete genome sequence of Bacillus anthracis Sterne.</title>
        <authorList>
            <person name="Brettin T.S."/>
            <person name="Bruce D."/>
            <person name="Challacombe J.F."/>
            <person name="Gilna P."/>
            <person name="Han C."/>
            <person name="Hill K."/>
            <person name="Hitchcock P."/>
            <person name="Jackson P."/>
            <person name="Keim P."/>
            <person name="Longmire J."/>
            <person name="Lucas S."/>
            <person name="Okinaka R."/>
            <person name="Richardson P."/>
            <person name="Rubin E."/>
            <person name="Tice H."/>
        </authorList>
    </citation>
    <scope>NUCLEOTIDE SEQUENCE [LARGE SCALE GENOMIC DNA]</scope>
    <source>
        <strain>Sterne</strain>
    </source>
</reference>
<reference key="3">
    <citation type="journal article" date="2009" name="J. Bacteriol.">
        <title>The complete genome sequence of Bacillus anthracis Ames 'Ancestor'.</title>
        <authorList>
            <person name="Ravel J."/>
            <person name="Jiang L."/>
            <person name="Stanley S.T."/>
            <person name="Wilson M.R."/>
            <person name="Decker R.S."/>
            <person name="Read T.D."/>
            <person name="Worsham P."/>
            <person name="Keim P.S."/>
            <person name="Salzberg S.L."/>
            <person name="Fraser-Liggett C.M."/>
            <person name="Rasko D.A."/>
        </authorList>
    </citation>
    <scope>NUCLEOTIDE SEQUENCE [LARGE SCALE GENOMIC DNA]</scope>
    <source>
        <strain>Ames ancestor</strain>
    </source>
</reference>
<name>RL7_BACAN</name>
<dbReference type="EMBL" id="AE016879">
    <property type="protein sequence ID" value="AAP24154.1"/>
    <property type="molecule type" value="Genomic_DNA"/>
</dbReference>
<dbReference type="EMBL" id="AE017225">
    <property type="protein sequence ID" value="AAT52437.1"/>
    <property type="molecule type" value="Genomic_DNA"/>
</dbReference>
<dbReference type="EMBL" id="AE017334">
    <property type="protein sequence ID" value="AAT29179.1"/>
    <property type="molecule type" value="Genomic_DNA"/>
</dbReference>
<dbReference type="RefSeq" id="NP_842668.1">
    <property type="nucleotide sequence ID" value="NC_003997.3"/>
</dbReference>
<dbReference type="RefSeq" id="WP_000159736.1">
    <property type="nucleotide sequence ID" value="NZ_WXXJ01000051.1"/>
</dbReference>
<dbReference type="RefSeq" id="YP_026386.1">
    <property type="nucleotide sequence ID" value="NC_005945.1"/>
</dbReference>
<dbReference type="SMR" id="Q81VU0"/>
<dbReference type="STRING" id="261594.GBAA_0100"/>
<dbReference type="DNASU" id="1085015"/>
<dbReference type="GeneID" id="93010953"/>
<dbReference type="KEGG" id="ban:BA_0100"/>
<dbReference type="KEGG" id="bar:GBAA_0100"/>
<dbReference type="KEGG" id="bat:BAS0100"/>
<dbReference type="PATRIC" id="fig|198094.11.peg.97"/>
<dbReference type="eggNOG" id="COG0222">
    <property type="taxonomic scope" value="Bacteria"/>
</dbReference>
<dbReference type="HOGENOM" id="CLU_086499_3_2_9"/>
<dbReference type="OMA" id="LEDKWGV"/>
<dbReference type="OrthoDB" id="9811748at2"/>
<dbReference type="Proteomes" id="UP000000427">
    <property type="component" value="Chromosome"/>
</dbReference>
<dbReference type="Proteomes" id="UP000000594">
    <property type="component" value="Chromosome"/>
</dbReference>
<dbReference type="GO" id="GO:0022625">
    <property type="term" value="C:cytosolic large ribosomal subunit"/>
    <property type="evidence" value="ECO:0007669"/>
    <property type="project" value="TreeGrafter"/>
</dbReference>
<dbReference type="GO" id="GO:0003729">
    <property type="term" value="F:mRNA binding"/>
    <property type="evidence" value="ECO:0007669"/>
    <property type="project" value="TreeGrafter"/>
</dbReference>
<dbReference type="GO" id="GO:0003735">
    <property type="term" value="F:structural constituent of ribosome"/>
    <property type="evidence" value="ECO:0007669"/>
    <property type="project" value="InterPro"/>
</dbReference>
<dbReference type="GO" id="GO:0006412">
    <property type="term" value="P:translation"/>
    <property type="evidence" value="ECO:0007669"/>
    <property type="project" value="UniProtKB-UniRule"/>
</dbReference>
<dbReference type="CDD" id="cd00387">
    <property type="entry name" value="Ribosomal_L7_L12"/>
    <property type="match status" value="1"/>
</dbReference>
<dbReference type="FunFam" id="1.20.5.710:FF:000002">
    <property type="entry name" value="50S ribosomal protein L7/L12"/>
    <property type="match status" value="1"/>
</dbReference>
<dbReference type="FunFam" id="3.30.1390.10:FF:000001">
    <property type="entry name" value="50S ribosomal protein L7/L12"/>
    <property type="match status" value="1"/>
</dbReference>
<dbReference type="Gene3D" id="3.30.1390.10">
    <property type="match status" value="1"/>
</dbReference>
<dbReference type="Gene3D" id="1.20.5.710">
    <property type="entry name" value="Single helix bin"/>
    <property type="match status" value="1"/>
</dbReference>
<dbReference type="HAMAP" id="MF_00368">
    <property type="entry name" value="Ribosomal_bL12"/>
    <property type="match status" value="1"/>
</dbReference>
<dbReference type="InterPro" id="IPR000206">
    <property type="entry name" value="Ribosomal_bL12"/>
</dbReference>
<dbReference type="InterPro" id="IPR013823">
    <property type="entry name" value="Ribosomal_bL12_C"/>
</dbReference>
<dbReference type="InterPro" id="IPR014719">
    <property type="entry name" value="Ribosomal_bL12_C/ClpS-like"/>
</dbReference>
<dbReference type="InterPro" id="IPR008932">
    <property type="entry name" value="Ribosomal_bL12_oligo"/>
</dbReference>
<dbReference type="InterPro" id="IPR036235">
    <property type="entry name" value="Ribosomal_bL12_oligo_N_sf"/>
</dbReference>
<dbReference type="NCBIfam" id="TIGR00855">
    <property type="entry name" value="L12"/>
    <property type="match status" value="1"/>
</dbReference>
<dbReference type="PANTHER" id="PTHR45987">
    <property type="entry name" value="39S RIBOSOMAL PROTEIN L12"/>
    <property type="match status" value="1"/>
</dbReference>
<dbReference type="PANTHER" id="PTHR45987:SF4">
    <property type="entry name" value="LARGE RIBOSOMAL SUBUNIT PROTEIN BL12M"/>
    <property type="match status" value="1"/>
</dbReference>
<dbReference type="Pfam" id="PF00542">
    <property type="entry name" value="Ribosomal_L12"/>
    <property type="match status" value="1"/>
</dbReference>
<dbReference type="Pfam" id="PF16320">
    <property type="entry name" value="Ribosomal_L12_N"/>
    <property type="match status" value="1"/>
</dbReference>
<dbReference type="SUPFAM" id="SSF54736">
    <property type="entry name" value="ClpS-like"/>
    <property type="match status" value="1"/>
</dbReference>
<dbReference type="SUPFAM" id="SSF48300">
    <property type="entry name" value="Ribosomal protein L7/12, oligomerisation (N-terminal) domain"/>
    <property type="match status" value="1"/>
</dbReference>
<evidence type="ECO:0000255" key="1">
    <source>
        <dbReference type="HAMAP-Rule" id="MF_00368"/>
    </source>
</evidence>
<evidence type="ECO:0000305" key="2"/>
<comment type="function">
    <text evidence="1">Forms part of the ribosomal stalk which helps the ribosome interact with GTP-bound translation factors. Is thus essential for accurate translation.</text>
</comment>
<comment type="subunit">
    <text evidence="1">Homodimer. Part of the ribosomal stalk of the 50S ribosomal subunit. Forms a multimeric L10(L12)X complex, where L10 forms an elongated spine to which 2 to 4 L12 dimers bind in a sequential fashion. Binds GTP-bound translation factors.</text>
</comment>
<comment type="similarity">
    <text evidence="1">Belongs to the bacterial ribosomal protein bL12 family.</text>
</comment>
<organism>
    <name type="scientific">Bacillus anthracis</name>
    <dbReference type="NCBI Taxonomy" id="1392"/>
    <lineage>
        <taxon>Bacteria</taxon>
        <taxon>Bacillati</taxon>
        <taxon>Bacillota</taxon>
        <taxon>Bacilli</taxon>
        <taxon>Bacillales</taxon>
        <taxon>Bacillaceae</taxon>
        <taxon>Bacillus</taxon>
        <taxon>Bacillus cereus group</taxon>
    </lineage>
</organism>
<feature type="chain" id="PRO_0000243378" description="Large ribosomal subunit protein bL12">
    <location>
        <begin position="1"/>
        <end position="119"/>
    </location>
</feature>
<accession>Q81VU0</accession>
<accession>Q6I4U4</accession>
<accession>Q6KYI9</accession>